<proteinExistence type="inferred from homology"/>
<dbReference type="EMBL" id="AE005674">
    <property type="protein sequence ID" value="AAN44526.2"/>
    <property type="molecule type" value="Genomic_DNA"/>
</dbReference>
<dbReference type="EMBL" id="AE014073">
    <property type="protein sequence ID" value="AAP18337.1"/>
    <property type="molecule type" value="Genomic_DNA"/>
</dbReference>
<dbReference type="RefSeq" id="NP_708819.2">
    <property type="nucleotide sequence ID" value="NC_004337.2"/>
</dbReference>
<dbReference type="RefSeq" id="WP_005051898.1">
    <property type="nucleotide sequence ID" value="NZ_WPGW01000034.1"/>
</dbReference>
<dbReference type="PaxDb" id="198214-SF3048"/>
<dbReference type="GeneID" id="1026626"/>
<dbReference type="KEGG" id="sfl:SF3048"/>
<dbReference type="KEGG" id="sfx:S3250"/>
<dbReference type="PATRIC" id="fig|198214.7.peg.3622"/>
<dbReference type="HOGENOM" id="CLU_097887_1_1_6"/>
<dbReference type="Proteomes" id="UP000001006">
    <property type="component" value="Chromosome"/>
</dbReference>
<dbReference type="Proteomes" id="UP000002673">
    <property type="component" value="Chromosome"/>
</dbReference>
<dbReference type="GO" id="GO:0005886">
    <property type="term" value="C:plasma membrane"/>
    <property type="evidence" value="ECO:0007669"/>
    <property type="project" value="UniProtKB-SubCell"/>
</dbReference>
<dbReference type="HAMAP" id="MF_00143">
    <property type="entry name" value="UPF0114"/>
    <property type="match status" value="1"/>
</dbReference>
<dbReference type="InterPro" id="IPR005134">
    <property type="entry name" value="UPF0114"/>
</dbReference>
<dbReference type="InterPro" id="IPR020761">
    <property type="entry name" value="UPF0114_bac"/>
</dbReference>
<dbReference type="NCBIfam" id="TIGR00645">
    <property type="entry name" value="HI0507"/>
    <property type="match status" value="1"/>
</dbReference>
<dbReference type="PANTHER" id="PTHR38596">
    <property type="entry name" value="UPF0114 PROTEIN YQHA"/>
    <property type="match status" value="1"/>
</dbReference>
<dbReference type="PANTHER" id="PTHR38596:SF1">
    <property type="entry name" value="UPF0114 PROTEIN YQHA"/>
    <property type="match status" value="1"/>
</dbReference>
<dbReference type="Pfam" id="PF03350">
    <property type="entry name" value="UPF0114"/>
    <property type="match status" value="1"/>
</dbReference>
<comment type="subcellular location">
    <subcellularLocation>
        <location evidence="1">Cell membrane</location>
        <topology evidence="1">Multi-pass membrane protein</topology>
    </subcellularLocation>
</comment>
<comment type="similarity">
    <text evidence="1">Belongs to the UPF0114 family.</text>
</comment>
<gene>
    <name evidence="1" type="primary">yqhA</name>
    <name type="ordered locus">SF3048</name>
    <name type="ordered locus">S3250</name>
</gene>
<protein>
    <recommendedName>
        <fullName evidence="1">UPF0114 protein YqhA</fullName>
    </recommendedName>
</protein>
<accession>Q7UBK4</accession>
<accession>Q83JL8</accession>
<reference key="1">
    <citation type="journal article" date="2002" name="Nucleic Acids Res.">
        <title>Genome sequence of Shigella flexneri 2a: insights into pathogenicity through comparison with genomes of Escherichia coli K12 and O157.</title>
        <authorList>
            <person name="Jin Q."/>
            <person name="Yuan Z."/>
            <person name="Xu J."/>
            <person name="Wang Y."/>
            <person name="Shen Y."/>
            <person name="Lu W."/>
            <person name="Wang J."/>
            <person name="Liu H."/>
            <person name="Yang J."/>
            <person name="Yang F."/>
            <person name="Zhang X."/>
            <person name="Zhang J."/>
            <person name="Yang G."/>
            <person name="Wu H."/>
            <person name="Qu D."/>
            <person name="Dong J."/>
            <person name="Sun L."/>
            <person name="Xue Y."/>
            <person name="Zhao A."/>
            <person name="Gao Y."/>
            <person name="Zhu J."/>
            <person name="Kan B."/>
            <person name="Ding K."/>
            <person name="Chen S."/>
            <person name="Cheng H."/>
            <person name="Yao Z."/>
            <person name="He B."/>
            <person name="Chen R."/>
            <person name="Ma D."/>
            <person name="Qiang B."/>
            <person name="Wen Y."/>
            <person name="Hou Y."/>
            <person name="Yu J."/>
        </authorList>
    </citation>
    <scope>NUCLEOTIDE SEQUENCE [LARGE SCALE GENOMIC DNA]</scope>
    <source>
        <strain>301 / Serotype 2a</strain>
    </source>
</reference>
<reference key="2">
    <citation type="journal article" date="2003" name="Infect. Immun.">
        <title>Complete genome sequence and comparative genomics of Shigella flexneri serotype 2a strain 2457T.</title>
        <authorList>
            <person name="Wei J."/>
            <person name="Goldberg M.B."/>
            <person name="Burland V."/>
            <person name="Venkatesan M.M."/>
            <person name="Deng W."/>
            <person name="Fournier G."/>
            <person name="Mayhew G.F."/>
            <person name="Plunkett G. III"/>
            <person name="Rose D.J."/>
            <person name="Darling A."/>
            <person name="Mau B."/>
            <person name="Perna N.T."/>
            <person name="Payne S.M."/>
            <person name="Runyen-Janecky L.J."/>
            <person name="Zhou S."/>
            <person name="Schwartz D.C."/>
            <person name="Blattner F.R."/>
        </authorList>
    </citation>
    <scope>NUCLEOTIDE SEQUENCE [LARGE SCALE GENOMIC DNA]</scope>
    <source>
        <strain>ATCC 700930 / 2457T / Serotype 2a</strain>
    </source>
</reference>
<organism>
    <name type="scientific">Shigella flexneri</name>
    <dbReference type="NCBI Taxonomy" id="623"/>
    <lineage>
        <taxon>Bacteria</taxon>
        <taxon>Pseudomonadati</taxon>
        <taxon>Pseudomonadota</taxon>
        <taxon>Gammaproteobacteria</taxon>
        <taxon>Enterobacterales</taxon>
        <taxon>Enterobacteriaceae</taxon>
        <taxon>Shigella</taxon>
    </lineage>
</organism>
<evidence type="ECO:0000255" key="1">
    <source>
        <dbReference type="HAMAP-Rule" id="MF_00143"/>
    </source>
</evidence>
<feature type="chain" id="PRO_0000214380" description="UPF0114 protein YqhA">
    <location>
        <begin position="1"/>
        <end position="164"/>
    </location>
</feature>
<feature type="transmembrane region" description="Helical" evidence="1">
    <location>
        <begin position="10"/>
        <end position="32"/>
    </location>
</feature>
<feature type="transmembrane region" description="Helical" evidence="1">
    <location>
        <begin position="53"/>
        <end position="75"/>
    </location>
</feature>
<feature type="transmembrane region" description="Helical" evidence="1">
    <location>
        <begin position="136"/>
        <end position="155"/>
    </location>
</feature>
<name>YQHA_SHIFL</name>
<keyword id="KW-1003">Cell membrane</keyword>
<keyword id="KW-0472">Membrane</keyword>
<keyword id="KW-1185">Reference proteome</keyword>
<keyword id="KW-0812">Transmembrane</keyword>
<keyword id="KW-1133">Transmembrane helix</keyword>
<sequence>MERFLENAMYASRWLLAPVYFGLSLALVALALKFFQEIIHVLPNIFSMAESDLILVLLSLVDMTLVGGLLVMVMFSGYENFVSQLDISENKEKLKWLGKMDATSLKNKVAASIVAISSIHLLRVFMDAKNVPDNKLMWYVIIHLTFVLSAFVMGYLDRLTRHNH</sequence>